<name>RL6_PARD8</name>
<dbReference type="EMBL" id="CP000140">
    <property type="protein sequence ID" value="ABR44090.1"/>
    <property type="molecule type" value="Genomic_DNA"/>
</dbReference>
<dbReference type="RefSeq" id="WP_005853990.1">
    <property type="nucleotide sequence ID" value="NZ_LR215978.1"/>
</dbReference>
<dbReference type="SMR" id="A6LEH6"/>
<dbReference type="STRING" id="435591.BDI_2365"/>
<dbReference type="PaxDb" id="435591-BDI_2365"/>
<dbReference type="GeneID" id="93522358"/>
<dbReference type="KEGG" id="pdi:BDI_2365"/>
<dbReference type="eggNOG" id="COG0097">
    <property type="taxonomic scope" value="Bacteria"/>
</dbReference>
<dbReference type="HOGENOM" id="CLU_065464_1_2_10"/>
<dbReference type="BioCyc" id="PDIS435591:G1G5A-2430-MONOMER"/>
<dbReference type="Proteomes" id="UP000000566">
    <property type="component" value="Chromosome"/>
</dbReference>
<dbReference type="GO" id="GO:0022625">
    <property type="term" value="C:cytosolic large ribosomal subunit"/>
    <property type="evidence" value="ECO:0007669"/>
    <property type="project" value="TreeGrafter"/>
</dbReference>
<dbReference type="GO" id="GO:0019843">
    <property type="term" value="F:rRNA binding"/>
    <property type="evidence" value="ECO:0007669"/>
    <property type="project" value="UniProtKB-UniRule"/>
</dbReference>
<dbReference type="GO" id="GO:0003735">
    <property type="term" value="F:structural constituent of ribosome"/>
    <property type="evidence" value="ECO:0007669"/>
    <property type="project" value="InterPro"/>
</dbReference>
<dbReference type="GO" id="GO:0002181">
    <property type="term" value="P:cytoplasmic translation"/>
    <property type="evidence" value="ECO:0007669"/>
    <property type="project" value="TreeGrafter"/>
</dbReference>
<dbReference type="FunFam" id="3.90.930.12:FF:000002">
    <property type="entry name" value="50S ribosomal protein L6"/>
    <property type="match status" value="1"/>
</dbReference>
<dbReference type="FunFam" id="3.90.930.12:FF:000006">
    <property type="entry name" value="50S ribosomal protein L6"/>
    <property type="match status" value="1"/>
</dbReference>
<dbReference type="Gene3D" id="3.90.930.12">
    <property type="entry name" value="Ribosomal protein L6, alpha-beta domain"/>
    <property type="match status" value="2"/>
</dbReference>
<dbReference type="HAMAP" id="MF_01365_B">
    <property type="entry name" value="Ribosomal_uL6_B"/>
    <property type="match status" value="1"/>
</dbReference>
<dbReference type="InterPro" id="IPR000702">
    <property type="entry name" value="Ribosomal_uL6-like"/>
</dbReference>
<dbReference type="InterPro" id="IPR036789">
    <property type="entry name" value="Ribosomal_uL6-like_a/b-dom_sf"/>
</dbReference>
<dbReference type="InterPro" id="IPR020040">
    <property type="entry name" value="Ribosomal_uL6_a/b-dom"/>
</dbReference>
<dbReference type="InterPro" id="IPR019906">
    <property type="entry name" value="Ribosomal_uL6_bac-type"/>
</dbReference>
<dbReference type="InterPro" id="IPR002358">
    <property type="entry name" value="Ribosomal_uL6_CS"/>
</dbReference>
<dbReference type="NCBIfam" id="TIGR03654">
    <property type="entry name" value="L6_bact"/>
    <property type="match status" value="1"/>
</dbReference>
<dbReference type="PANTHER" id="PTHR11655">
    <property type="entry name" value="60S/50S RIBOSOMAL PROTEIN L6/L9"/>
    <property type="match status" value="1"/>
</dbReference>
<dbReference type="PANTHER" id="PTHR11655:SF14">
    <property type="entry name" value="LARGE RIBOSOMAL SUBUNIT PROTEIN UL6M"/>
    <property type="match status" value="1"/>
</dbReference>
<dbReference type="Pfam" id="PF00347">
    <property type="entry name" value="Ribosomal_L6"/>
    <property type="match status" value="2"/>
</dbReference>
<dbReference type="PIRSF" id="PIRSF002162">
    <property type="entry name" value="Ribosomal_L6"/>
    <property type="match status" value="1"/>
</dbReference>
<dbReference type="PRINTS" id="PR00059">
    <property type="entry name" value="RIBOSOMALL6"/>
</dbReference>
<dbReference type="SUPFAM" id="SSF56053">
    <property type="entry name" value="Ribosomal protein L6"/>
    <property type="match status" value="2"/>
</dbReference>
<dbReference type="PROSITE" id="PS00525">
    <property type="entry name" value="RIBOSOMAL_L6_1"/>
    <property type="match status" value="1"/>
</dbReference>
<proteinExistence type="inferred from homology"/>
<protein>
    <recommendedName>
        <fullName evidence="1">Large ribosomal subunit protein uL6</fullName>
    </recommendedName>
    <alternativeName>
        <fullName evidence="2">50S ribosomal protein L6</fullName>
    </alternativeName>
</protein>
<sequence>MSRIGKLPIHVPAGVTVTIKDNVVTVKGPKGELVQEVNPDINVTLEDGVIHLTRPTDDKNHRALHGLYRSLINNMVVGCSEGYKKELELVGVGYRVSNTGQLLDLSLGYTHNIYLQLPKEVKVETKSERNKNPLIILESADKQLLGQICAKIRSFRMPEPYKGKGIKFVGEEIRRKSGKSAGK</sequence>
<gene>
    <name evidence="1" type="primary">rplF</name>
    <name type="ordered locus">BDI_2365</name>
</gene>
<comment type="function">
    <text evidence="1">This protein binds to the 23S rRNA, and is important in its secondary structure. It is located near the subunit interface in the base of the L7/L12 stalk, and near the tRNA binding site of the peptidyltransferase center.</text>
</comment>
<comment type="subunit">
    <text evidence="1">Part of the 50S ribosomal subunit.</text>
</comment>
<comment type="similarity">
    <text evidence="1">Belongs to the universal ribosomal protein uL6 family.</text>
</comment>
<keyword id="KW-1185">Reference proteome</keyword>
<keyword id="KW-0687">Ribonucleoprotein</keyword>
<keyword id="KW-0689">Ribosomal protein</keyword>
<keyword id="KW-0694">RNA-binding</keyword>
<keyword id="KW-0699">rRNA-binding</keyword>
<reference key="1">
    <citation type="journal article" date="2007" name="PLoS Biol.">
        <title>Evolution of symbiotic bacteria in the distal human intestine.</title>
        <authorList>
            <person name="Xu J."/>
            <person name="Mahowald M.A."/>
            <person name="Ley R.E."/>
            <person name="Lozupone C.A."/>
            <person name="Hamady M."/>
            <person name="Martens E.C."/>
            <person name="Henrissat B."/>
            <person name="Coutinho P.M."/>
            <person name="Minx P."/>
            <person name="Latreille P."/>
            <person name="Cordum H."/>
            <person name="Van Brunt A."/>
            <person name="Kim K."/>
            <person name="Fulton R.S."/>
            <person name="Fulton L.A."/>
            <person name="Clifton S.W."/>
            <person name="Wilson R.K."/>
            <person name="Knight R.D."/>
            <person name="Gordon J.I."/>
        </authorList>
    </citation>
    <scope>NUCLEOTIDE SEQUENCE [LARGE SCALE GENOMIC DNA]</scope>
    <source>
        <strain>ATCC 8503 / DSM 20701 / CIP 104284 / JCM 5825 / NCTC 11152</strain>
    </source>
</reference>
<evidence type="ECO:0000255" key="1">
    <source>
        <dbReference type="HAMAP-Rule" id="MF_01365"/>
    </source>
</evidence>
<evidence type="ECO:0000305" key="2"/>
<organism>
    <name type="scientific">Parabacteroides distasonis (strain ATCC 8503 / DSM 20701 / CIP 104284 / JCM 5825 / NCTC 11152)</name>
    <dbReference type="NCBI Taxonomy" id="435591"/>
    <lineage>
        <taxon>Bacteria</taxon>
        <taxon>Pseudomonadati</taxon>
        <taxon>Bacteroidota</taxon>
        <taxon>Bacteroidia</taxon>
        <taxon>Bacteroidales</taxon>
        <taxon>Tannerellaceae</taxon>
        <taxon>Parabacteroides</taxon>
    </lineage>
</organism>
<feature type="chain" id="PRO_1000055278" description="Large ribosomal subunit protein uL6">
    <location>
        <begin position="1"/>
        <end position="183"/>
    </location>
</feature>
<accession>A6LEH6</accession>